<accession>C0HLX1</accession>
<keyword id="KW-0903">Direct protein sequencing</keyword>
<keyword id="KW-0964">Secreted</keyword>
<sequence>DDAVADGEHAISGVVDS</sequence>
<feature type="chain" id="PRO_0000453944" description="Septenin 1k">
    <location>
        <begin position="1"/>
        <end position="17"/>
    </location>
</feature>
<feature type="unsure residue" description="L or I" evidence="1">
    <location>
        <position position="11"/>
    </location>
</feature>
<name>SEP1K_OSTSE</name>
<dbReference type="GO" id="GO:0005576">
    <property type="term" value="C:extracellular region"/>
    <property type="evidence" value="ECO:0007669"/>
    <property type="project" value="UniProtKB-SubCell"/>
</dbReference>
<proteinExistence type="evidence at protein level"/>
<protein>
    <recommendedName>
        <fullName evidence="2">Septenin 1k</fullName>
    </recommendedName>
</protein>
<evidence type="ECO:0000269" key="1">
    <source>
    </source>
</evidence>
<evidence type="ECO:0000303" key="2">
    <source>
    </source>
</evidence>
<evidence type="ECO:0000305" key="3"/>
<evidence type="ECO:0000305" key="4">
    <source>
    </source>
</evidence>
<comment type="function">
    <text evidence="2">May act as an antimicrobial peptide.</text>
</comment>
<comment type="subcellular location">
    <subcellularLocation>
        <location evidence="1">Secreted</location>
    </subcellularLocation>
</comment>
<comment type="tissue specificity">
    <text evidence="4">Expressed in skin glands.</text>
</comment>
<comment type="mass spectrometry"/>
<comment type="similarity">
    <text evidence="3">Belongs to the Frog skin active peptide (FSAP) family. Septenin subfamily.</text>
</comment>
<reference key="1">
    <citation type="journal article" date="2021" name="Rapid Commun. Mass Spectrom.">
        <title>Manual mass spectrometry de novo sequencing of the anionic host defense peptides of the Cuban Treefrog Osteopilus septentrionalis.</title>
        <authorList>
            <person name="Samgina T.Y."/>
            <person name="Tolpina M.D."/>
            <person name="Surin A.K."/>
            <person name="Kovalev S.V."/>
            <person name="Bosch R.A."/>
            <person name="Alonso I.P."/>
            <person name="Garcia F.A."/>
            <person name="Gonzalez Lopez L.J."/>
            <person name="Lebedev A.T."/>
        </authorList>
    </citation>
    <scope>PROTEIN SEQUENCE</scope>
    <scope>MASS SPECTROMETRY</scope>
</reference>
<organism>
    <name type="scientific">Osteopilus septentrionalis</name>
    <name type="common">Cuban treefrog</name>
    <dbReference type="NCBI Taxonomy" id="317373"/>
    <lineage>
        <taxon>Eukaryota</taxon>
        <taxon>Metazoa</taxon>
        <taxon>Chordata</taxon>
        <taxon>Craniata</taxon>
        <taxon>Vertebrata</taxon>
        <taxon>Euteleostomi</taxon>
        <taxon>Amphibia</taxon>
        <taxon>Batrachia</taxon>
        <taxon>Anura</taxon>
        <taxon>Neobatrachia</taxon>
        <taxon>Hyloidea</taxon>
        <taxon>Hylidae</taxon>
        <taxon>Hylinae</taxon>
        <taxon>Lophiohylini</taxon>
        <taxon>Osteopilus</taxon>
    </lineage>
</organism>